<feature type="signal peptide" evidence="2">
    <location>
        <begin position="1"/>
        <end position="21"/>
    </location>
</feature>
<feature type="chain" id="PRO_0000000484" description="Gamma-aminobutyric acid receptor subunit gamma-4">
    <location>
        <begin position="22"/>
        <end position="457"/>
    </location>
</feature>
<feature type="topological domain" description="Extracellular" evidence="3">
    <location>
        <begin position="22"/>
        <end position="256"/>
    </location>
</feature>
<feature type="transmembrane region" description="Helical" evidence="3">
    <location>
        <begin position="257"/>
        <end position="279"/>
    </location>
</feature>
<feature type="transmembrane region" description="Helical" evidence="3">
    <location>
        <begin position="283"/>
        <end position="305"/>
    </location>
</feature>
<feature type="transmembrane region" description="Helical" evidence="3">
    <location>
        <begin position="317"/>
        <end position="339"/>
    </location>
</feature>
<feature type="topological domain" description="Cytoplasmic" evidence="3">
    <location>
        <begin position="340"/>
        <end position="433"/>
    </location>
</feature>
<feature type="transmembrane region" description="Helical" evidence="3">
    <location>
        <begin position="434"/>
        <end position="457"/>
    </location>
</feature>
<feature type="glycosylation site" description="N-linked (GlcNAc...) asparagine" evidence="2">
    <location>
        <position position="35"/>
    </location>
</feature>
<feature type="glycosylation site" description="N-linked (GlcNAc...) asparagine" evidence="2">
    <location>
        <position position="112"/>
    </location>
</feature>
<feature type="glycosylation site" description="N-linked (GlcNAc...) asparagine" evidence="2">
    <location>
        <position position="230"/>
    </location>
</feature>
<feature type="disulfide bond" evidence="1">
    <location>
        <begin position="173"/>
        <end position="187"/>
    </location>
</feature>
<dbReference type="EMBL" id="X73533">
    <property type="protein sequence ID" value="CAA51939.1"/>
    <property type="molecule type" value="mRNA"/>
</dbReference>
<dbReference type="PIR" id="S38296">
    <property type="entry name" value="S38296"/>
</dbReference>
<dbReference type="RefSeq" id="NP_990576.1">
    <property type="nucleotide sequence ID" value="NM_205245.1"/>
</dbReference>
<dbReference type="SMR" id="P34904"/>
<dbReference type="FunCoup" id="P34904">
    <property type="interactions" value="53"/>
</dbReference>
<dbReference type="STRING" id="9031.ENSGALP00000011763"/>
<dbReference type="GlyCosmos" id="P34904">
    <property type="glycosylation" value="3 sites, No reported glycans"/>
</dbReference>
<dbReference type="GlyGen" id="P34904">
    <property type="glycosylation" value="3 sites"/>
</dbReference>
<dbReference type="PaxDb" id="9031-ENSGALP00000011763"/>
<dbReference type="Ensembl" id="ENSGALT00010036345.1">
    <property type="protein sequence ID" value="ENSGALP00010021138.1"/>
    <property type="gene ID" value="ENSGALG00010015096.1"/>
</dbReference>
<dbReference type="GeneID" id="396173"/>
<dbReference type="KEGG" id="gga:396173"/>
<dbReference type="CTD" id="2564"/>
<dbReference type="VEuPathDB" id="HostDB:geneid_396173"/>
<dbReference type="eggNOG" id="KOG3642">
    <property type="taxonomic scope" value="Eukaryota"/>
</dbReference>
<dbReference type="GeneTree" id="ENSGT00940000161201"/>
<dbReference type="HOGENOM" id="CLU_010920_2_0_1"/>
<dbReference type="InParanoid" id="P34904"/>
<dbReference type="OMA" id="MHWPPEV"/>
<dbReference type="OrthoDB" id="203862at2759"/>
<dbReference type="PhylomeDB" id="P34904"/>
<dbReference type="PRO" id="PR:P34904"/>
<dbReference type="Proteomes" id="UP000000539">
    <property type="component" value="Chromosome 4"/>
</dbReference>
<dbReference type="Bgee" id="ENSGALG00000020292">
    <property type="expression patterns" value="Expressed in cerebellum"/>
</dbReference>
<dbReference type="GO" id="GO:0034707">
    <property type="term" value="C:chloride channel complex"/>
    <property type="evidence" value="ECO:0007669"/>
    <property type="project" value="UniProtKB-KW"/>
</dbReference>
<dbReference type="GO" id="GO:0032590">
    <property type="term" value="C:dendrite membrane"/>
    <property type="evidence" value="ECO:0000318"/>
    <property type="project" value="GO_Central"/>
</dbReference>
<dbReference type="GO" id="GO:1902711">
    <property type="term" value="C:GABA-A receptor complex"/>
    <property type="evidence" value="ECO:0000318"/>
    <property type="project" value="GO_Central"/>
</dbReference>
<dbReference type="GO" id="GO:0098794">
    <property type="term" value="C:postsynapse"/>
    <property type="evidence" value="ECO:0000318"/>
    <property type="project" value="GO_Central"/>
</dbReference>
<dbReference type="GO" id="GO:0045211">
    <property type="term" value="C:postsynaptic membrane"/>
    <property type="evidence" value="ECO:0007669"/>
    <property type="project" value="UniProtKB-SubCell"/>
</dbReference>
<dbReference type="GO" id="GO:0004890">
    <property type="term" value="F:GABA-A receptor activity"/>
    <property type="evidence" value="ECO:0007669"/>
    <property type="project" value="Ensembl"/>
</dbReference>
<dbReference type="GO" id="GO:0022851">
    <property type="term" value="F:GABA-gated chloride ion channel activity"/>
    <property type="evidence" value="ECO:0000318"/>
    <property type="project" value="GO_Central"/>
</dbReference>
<dbReference type="GO" id="GO:1902476">
    <property type="term" value="P:chloride transmembrane transport"/>
    <property type="evidence" value="ECO:0000318"/>
    <property type="project" value="GO_Central"/>
</dbReference>
<dbReference type="GO" id="GO:0007214">
    <property type="term" value="P:gamma-aminobutyric acid signaling pathway"/>
    <property type="evidence" value="ECO:0000318"/>
    <property type="project" value="GO_Central"/>
</dbReference>
<dbReference type="GO" id="GO:1904862">
    <property type="term" value="P:inhibitory synapse assembly"/>
    <property type="evidence" value="ECO:0000318"/>
    <property type="project" value="GO_Central"/>
</dbReference>
<dbReference type="GO" id="GO:2001226">
    <property type="term" value="P:negative regulation of chloride transport"/>
    <property type="evidence" value="ECO:0007669"/>
    <property type="project" value="Ensembl"/>
</dbReference>
<dbReference type="GO" id="GO:0051932">
    <property type="term" value="P:synaptic transmission, GABAergic"/>
    <property type="evidence" value="ECO:0000318"/>
    <property type="project" value="GO_Central"/>
</dbReference>
<dbReference type="CDD" id="cd19054">
    <property type="entry name" value="LGIC_TM_GABAAR_gamma"/>
    <property type="match status" value="1"/>
</dbReference>
<dbReference type="FunFam" id="1.20.58.390:FF:000067">
    <property type="entry name" value="Glycine receptor subunit alpha-2"/>
    <property type="match status" value="1"/>
</dbReference>
<dbReference type="FunFam" id="2.70.170.10:FF:000003">
    <property type="entry name" value="Putative gamma-aminobutyric acid receptor subunit gamma-2"/>
    <property type="match status" value="1"/>
</dbReference>
<dbReference type="Gene3D" id="2.70.170.10">
    <property type="entry name" value="Neurotransmitter-gated ion-channel ligand-binding domain"/>
    <property type="match status" value="1"/>
</dbReference>
<dbReference type="Gene3D" id="1.20.58.390">
    <property type="entry name" value="Neurotransmitter-gated ion-channel transmembrane domain"/>
    <property type="match status" value="1"/>
</dbReference>
<dbReference type="InterPro" id="IPR006028">
    <property type="entry name" value="GABAA/Glycine_rcpt"/>
</dbReference>
<dbReference type="InterPro" id="IPR005437">
    <property type="entry name" value="GABRG-1/4"/>
</dbReference>
<dbReference type="InterPro" id="IPR006202">
    <property type="entry name" value="Neur_chan_lig-bd"/>
</dbReference>
<dbReference type="InterPro" id="IPR036734">
    <property type="entry name" value="Neur_chan_lig-bd_sf"/>
</dbReference>
<dbReference type="InterPro" id="IPR006201">
    <property type="entry name" value="Neur_channel"/>
</dbReference>
<dbReference type="InterPro" id="IPR036719">
    <property type="entry name" value="Neuro-gated_channel_TM_sf"/>
</dbReference>
<dbReference type="InterPro" id="IPR038050">
    <property type="entry name" value="Neuro_actylchol_rec"/>
</dbReference>
<dbReference type="InterPro" id="IPR006029">
    <property type="entry name" value="Neurotrans-gated_channel_TM"/>
</dbReference>
<dbReference type="InterPro" id="IPR018000">
    <property type="entry name" value="Neurotransmitter_ion_chnl_CS"/>
</dbReference>
<dbReference type="NCBIfam" id="TIGR00860">
    <property type="entry name" value="LIC"/>
    <property type="match status" value="1"/>
</dbReference>
<dbReference type="PANTHER" id="PTHR18945">
    <property type="entry name" value="NEUROTRANSMITTER GATED ION CHANNEL"/>
    <property type="match status" value="1"/>
</dbReference>
<dbReference type="Pfam" id="PF02931">
    <property type="entry name" value="Neur_chan_LBD"/>
    <property type="match status" value="1"/>
</dbReference>
<dbReference type="Pfam" id="PF02932">
    <property type="entry name" value="Neur_chan_memb"/>
    <property type="match status" value="1"/>
</dbReference>
<dbReference type="PRINTS" id="PR00253">
    <property type="entry name" value="GABAARECEPTR"/>
</dbReference>
<dbReference type="PRINTS" id="PR01620">
    <property type="entry name" value="GABAARGAMMA"/>
</dbReference>
<dbReference type="PRINTS" id="PR00252">
    <property type="entry name" value="NRIONCHANNEL"/>
</dbReference>
<dbReference type="SUPFAM" id="SSF90112">
    <property type="entry name" value="Neurotransmitter-gated ion-channel transmembrane pore"/>
    <property type="match status" value="1"/>
</dbReference>
<dbReference type="SUPFAM" id="SSF63712">
    <property type="entry name" value="Nicotinic receptor ligand binding domain-like"/>
    <property type="match status" value="1"/>
</dbReference>
<dbReference type="PROSITE" id="PS00236">
    <property type="entry name" value="NEUROTR_ION_CHANNEL"/>
    <property type="match status" value="1"/>
</dbReference>
<keyword id="KW-1003">Cell membrane</keyword>
<keyword id="KW-0868">Chloride</keyword>
<keyword id="KW-0869">Chloride channel</keyword>
<keyword id="KW-1015">Disulfide bond</keyword>
<keyword id="KW-0325">Glycoprotein</keyword>
<keyword id="KW-0407">Ion channel</keyword>
<keyword id="KW-0406">Ion transport</keyword>
<keyword id="KW-0472">Membrane</keyword>
<keyword id="KW-0628">Postsynaptic cell membrane</keyword>
<keyword id="KW-1185">Reference proteome</keyword>
<keyword id="KW-0732">Signal</keyword>
<keyword id="KW-0770">Synapse</keyword>
<keyword id="KW-0812">Transmembrane</keyword>
<keyword id="KW-1133">Transmembrane helix</keyword>
<keyword id="KW-0813">Transport</keyword>
<comment type="function">
    <text>GABA, the major inhibitory neurotransmitter in the vertebrate brain, mediates neuronal inhibition by binding to the GABA/benzodiazepine receptor and opening an integral chloride channel.</text>
</comment>
<comment type="subunit">
    <text>Generally pentameric. There are five types of GABA(A) receptor chains: alpha, beta, gamma, delta, and rho.</text>
</comment>
<comment type="subcellular location">
    <subcellularLocation>
        <location>Postsynaptic cell membrane</location>
        <topology>Multi-pass membrane protein</topology>
    </subcellularLocation>
    <subcellularLocation>
        <location>Cell membrane</location>
        <topology>Multi-pass membrane protein</topology>
    </subcellularLocation>
</comment>
<comment type="tissue specificity">
    <text>Abundant in several brain regions, including the ectostriatum, nucleus rotundus and hyperstriatum ventrale.</text>
</comment>
<comment type="miscellaneous">
    <text>This subunit carries the benzodiazepine binding site.</text>
</comment>
<comment type="similarity">
    <text evidence="3">Belongs to the ligand-gated ion channel (TC 1.A.9) family. Gamma-aminobutyric acid receptor (TC 1.A.9.5) subfamily. GABRG4 sub-subfamily.</text>
</comment>
<sequence length="457" mass="53183">MPAMVLLLCLALGPALRSARCESTEEYDYDYLSINKTWVLTPKAQETDATQILNSLLKNYDNKLRPDIGIKPTFIDVDIYVNSIGPVSVIQMEYTIDIFFAQTWYDRRLRFNSTLKALTLNTNMVSRIWIPDTFFRNSKRADSHWITTPNQLLRIWNDGKVLYTLRLTIEAECLLQLQNFPMDTHSCPLVFSSYGYPREEIVYRWRRYSIEVSDQRTWRLYQFDFTGLRNTSEVLRTGAGEYMVMTVSFDLSRRMGYFAIQTYIPCILTVVLSWVSFWIKRDSTPARTSLGITTVLTMTTLSTISRKHLPRVSYITAMDLFVSVCFIFVFAALMEYATLNYLVGNKKPLEHSSRKARLPPAGAQVMPSFTAINININNIMHWPPEIEEDEDDDPGSPCLEGKECERFFCCIEDCQTGMWREGRVRIHISRLDSYSRVFFPTAFLLFNIVYWIAYLYL</sequence>
<organism>
    <name type="scientific">Gallus gallus</name>
    <name type="common">Chicken</name>
    <dbReference type="NCBI Taxonomy" id="9031"/>
    <lineage>
        <taxon>Eukaryota</taxon>
        <taxon>Metazoa</taxon>
        <taxon>Chordata</taxon>
        <taxon>Craniata</taxon>
        <taxon>Vertebrata</taxon>
        <taxon>Euteleostomi</taxon>
        <taxon>Archelosauria</taxon>
        <taxon>Archosauria</taxon>
        <taxon>Dinosauria</taxon>
        <taxon>Saurischia</taxon>
        <taxon>Theropoda</taxon>
        <taxon>Coelurosauria</taxon>
        <taxon>Aves</taxon>
        <taxon>Neognathae</taxon>
        <taxon>Galloanserae</taxon>
        <taxon>Galliformes</taxon>
        <taxon>Phasianidae</taxon>
        <taxon>Phasianinae</taxon>
        <taxon>Gallus</taxon>
    </lineage>
</organism>
<evidence type="ECO:0000250" key="1"/>
<evidence type="ECO:0000255" key="2"/>
<evidence type="ECO:0000305" key="3"/>
<gene>
    <name type="primary">GABRG4</name>
</gene>
<protein>
    <recommendedName>
        <fullName>Gamma-aminobutyric acid receptor subunit gamma-4</fullName>
    </recommendedName>
    <alternativeName>
        <fullName>GABA(A) receptor subunit gamma-4</fullName>
    </alternativeName>
</protein>
<proteinExistence type="evidence at transcript level"/>
<accession>P34904</accession>
<reference key="1">
    <citation type="journal article" date="1993" name="FEBS Lett.">
        <title>Molecular cloning reveals the existence of a fourth gamma subunit of the vertebrate brain GABAA receptor.</title>
        <authorList>
            <person name="Harvey R.J."/>
            <person name="Kim H.-C."/>
            <person name="Darlison M.G."/>
        </authorList>
    </citation>
    <scope>NUCLEOTIDE SEQUENCE [MRNA]</scope>
</reference>
<name>GBRG4_CHICK</name>